<dbReference type="EMBL" id="KL198007">
    <property type="protein sequence ID" value="KDQ29912.1"/>
    <property type="molecule type" value="Genomic_DNA"/>
</dbReference>
<dbReference type="VEuPathDB" id="FungiDB:PLEOSDRAFT_156845"/>
<dbReference type="HOGENOM" id="CLU_160159_0_0_1"/>
<dbReference type="InParanoid" id="A0A067P0I9"/>
<dbReference type="OrthoDB" id="141405at5338"/>
<dbReference type="Proteomes" id="UP000027073">
    <property type="component" value="Unassembled WGS sequence"/>
</dbReference>
<dbReference type="GO" id="GO:0005576">
    <property type="term" value="C:extracellular region"/>
    <property type="evidence" value="ECO:0007669"/>
    <property type="project" value="UniProtKB-KW"/>
</dbReference>
<dbReference type="GO" id="GO:0009277">
    <property type="term" value="C:fungal-type cell wall"/>
    <property type="evidence" value="ECO:0007669"/>
    <property type="project" value="InterPro"/>
</dbReference>
<dbReference type="GO" id="GO:0005199">
    <property type="term" value="F:structural constituent of cell wall"/>
    <property type="evidence" value="ECO:0007669"/>
    <property type="project" value="InterPro"/>
</dbReference>
<dbReference type="CDD" id="cd23507">
    <property type="entry name" value="hydrophobin_I"/>
    <property type="match status" value="1"/>
</dbReference>
<dbReference type="InterPro" id="IPR001338">
    <property type="entry name" value="Hydrophobin"/>
</dbReference>
<dbReference type="Pfam" id="PF01185">
    <property type="entry name" value="Hydrophobin"/>
    <property type="match status" value="1"/>
</dbReference>
<comment type="function">
    <text evidence="4">Aerial growth, conidiation, and dispersal of filamentous fungi in the environment rely upon a capability of their secreting small amphipathic proteins called hydrophobins (HPBs) with low sequence identity. Class I can self-assemble into an outermost layer of rodlet bundles on aerial cell surfaces, conferring cellular hydrophobicity that supports fungal growth, development and dispersal; whereas Class II form highly ordered films at water-air interfaces through intermolecular interactions but contribute nothing to the rodlet structure.</text>
</comment>
<comment type="subunit">
    <text evidence="1">Self-assembles to form functional amyloid fibrils called rodlets. Self-assembly into fibrillar rodlets occurs spontaneously at hydrophobic:hydrophilic interfaces and the rodlets further associate laterally to form amphipathic monolayers.</text>
</comment>
<comment type="subcellular location">
    <subcellularLocation>
        <location evidence="5">Secreted</location>
    </subcellularLocation>
    <subcellularLocation>
        <location evidence="5">Secreted</location>
        <location evidence="5">Cell wall</location>
    </subcellularLocation>
</comment>
<comment type="similarity">
    <text evidence="4">Belongs to the fungal hydrophobin family.</text>
</comment>
<gene>
    <name evidence="3" type="primary">Hydph11</name>
    <name type="ORF">PLEOSDRAFT_156845</name>
</gene>
<name>HYD11_PLEO1</name>
<reference key="1">
    <citation type="journal article" date="2014" name="Proc. Natl. Acad. Sci. U.S.A.">
        <title>Extensive sampling of basidiomycete genomes demonstrates inadequacy of the white-rot/brown-rot paradigm for wood decay fungi.</title>
        <authorList>
            <person name="Riley R."/>
            <person name="Salamov A.A."/>
            <person name="Brown D.W."/>
            <person name="Nagy L.G."/>
            <person name="Floudas D."/>
            <person name="Held B.W."/>
            <person name="Levasseur A."/>
            <person name="Lombard V."/>
            <person name="Morin E."/>
            <person name="Otillar R."/>
            <person name="Lindquist E.A."/>
            <person name="Sun H."/>
            <person name="LaButti K.M."/>
            <person name="Schmutz J."/>
            <person name="Jabbour D."/>
            <person name="Luo H."/>
            <person name="Baker S.E."/>
            <person name="Pisabarro A.G."/>
            <person name="Walton J.D."/>
            <person name="Blanchette R.A."/>
            <person name="Henrissat B."/>
            <person name="Martin F."/>
            <person name="Cullen D."/>
            <person name="Hibbett D.S."/>
            <person name="Grigoriev I.V."/>
        </authorList>
    </citation>
    <scope>NUCLEOTIDE SEQUENCE [LARGE SCALE GENOMIC DNA]</scope>
    <source>
        <strain>PC15</strain>
    </source>
</reference>
<reference key="2">
    <citation type="journal article" date="2021" name="Microbiol. Res.">
        <title>Identification of hydrophobin genes and their physiological functions related to growth and development in Pleurotus ostreatus.</title>
        <authorList>
            <person name="Xu D."/>
            <person name="Wang Y."/>
            <person name="Keerio A.A."/>
            <person name="Ma A."/>
        </authorList>
    </citation>
    <scope>IDENTIFICATION</scope>
</reference>
<proteinExistence type="inferred from homology"/>
<protein>
    <recommendedName>
        <fullName evidence="3">Class I hydrophobin 11</fullName>
    </recommendedName>
</protein>
<evidence type="ECO:0000250" key="1">
    <source>
        <dbReference type="UniProtKB" id="Q04571"/>
    </source>
</evidence>
<evidence type="ECO:0000255" key="2"/>
<evidence type="ECO:0000303" key="3">
    <source>
    </source>
</evidence>
<evidence type="ECO:0000305" key="4"/>
<evidence type="ECO:0000305" key="5">
    <source>
    </source>
</evidence>
<keyword id="KW-0134">Cell wall</keyword>
<keyword id="KW-1015">Disulfide bond</keyword>
<keyword id="KW-1185">Reference proteome</keyword>
<keyword id="KW-0964">Secreted</keyword>
<keyword id="KW-0732">Signal</keyword>
<organism>
    <name type="scientific">Pleurotus ostreatus (strain PC15)</name>
    <name type="common">Oyster mushroom</name>
    <dbReference type="NCBI Taxonomy" id="1137138"/>
    <lineage>
        <taxon>Eukaryota</taxon>
        <taxon>Fungi</taxon>
        <taxon>Dikarya</taxon>
        <taxon>Basidiomycota</taxon>
        <taxon>Agaricomycotina</taxon>
        <taxon>Agaricomycetes</taxon>
        <taxon>Agaricomycetidae</taxon>
        <taxon>Agaricales</taxon>
        <taxon>Pleurotineae</taxon>
        <taxon>Pleurotaceae</taxon>
        <taxon>Pleurotus</taxon>
    </lineage>
</organism>
<sequence length="129" mass="13501">MRLTPLLAALALPLLTVLATPLTPVGEAEVVEVDVAPRQISLNPASSCPKGQLWCCVSLDLVSNSLIAGLLVTLGILDPTGINTAGVQCTPLSWPFQMSCGNKDLCCDPDLPVVGLLLKLNCRSVNPLL</sequence>
<accession>A0A067P0I9</accession>
<feature type="signal peptide" evidence="2">
    <location>
        <begin position="1"/>
        <end position="19"/>
    </location>
</feature>
<feature type="chain" id="PRO_5013986911" description="Class I hydrophobin 11">
    <location>
        <begin position="20"/>
        <end position="129"/>
    </location>
</feature>
<feature type="disulfide bond" evidence="1">
    <location>
        <begin position="48"/>
        <end position="106"/>
    </location>
</feature>
<feature type="disulfide bond" evidence="1">
    <location>
        <begin position="55"/>
        <end position="100"/>
    </location>
</feature>
<feature type="disulfide bond" evidence="1">
    <location>
        <begin position="56"/>
        <end position="89"/>
    </location>
</feature>
<feature type="disulfide bond" evidence="1">
    <location>
        <begin position="107"/>
        <end position="122"/>
    </location>
</feature>